<keyword id="KW-0687">Ribonucleoprotein</keyword>
<keyword id="KW-0689">Ribosomal protein</keyword>
<sequence length="49" mass="6009">MRTKVTLACTECKQRNYDSMKNKKNDPDRLEMKKYCKFCKKHTLHRETK</sequence>
<comment type="similarity">
    <text evidence="1">Belongs to the bacterial ribosomal protein bL33 family.</text>
</comment>
<evidence type="ECO:0000255" key="1">
    <source>
        <dbReference type="HAMAP-Rule" id="MF_00294"/>
    </source>
</evidence>
<evidence type="ECO:0000305" key="2"/>
<proteinExistence type="inferred from homology"/>
<organism>
    <name type="scientific">Clostridium beijerinckii (strain ATCC 51743 / NCIMB 8052)</name>
    <name type="common">Clostridium acetobutylicum</name>
    <dbReference type="NCBI Taxonomy" id="290402"/>
    <lineage>
        <taxon>Bacteria</taxon>
        <taxon>Bacillati</taxon>
        <taxon>Bacillota</taxon>
        <taxon>Clostridia</taxon>
        <taxon>Eubacteriales</taxon>
        <taxon>Clostridiaceae</taxon>
        <taxon>Clostridium</taxon>
    </lineage>
</organism>
<reference key="1">
    <citation type="submission" date="2007-06" db="EMBL/GenBank/DDBJ databases">
        <title>Complete sequence of Clostridium beijerinckii NCIMB 8052.</title>
        <authorList>
            <consortium name="US DOE Joint Genome Institute"/>
            <person name="Copeland A."/>
            <person name="Lucas S."/>
            <person name="Lapidus A."/>
            <person name="Barry K."/>
            <person name="Detter J.C."/>
            <person name="Glavina del Rio T."/>
            <person name="Hammon N."/>
            <person name="Israni S."/>
            <person name="Dalin E."/>
            <person name="Tice H."/>
            <person name="Pitluck S."/>
            <person name="Sims D."/>
            <person name="Brettin T."/>
            <person name="Bruce D."/>
            <person name="Tapia R."/>
            <person name="Brainard J."/>
            <person name="Schmutz J."/>
            <person name="Larimer F."/>
            <person name="Land M."/>
            <person name="Hauser L."/>
            <person name="Kyrpides N."/>
            <person name="Mikhailova N."/>
            <person name="Bennet G."/>
            <person name="Cann I."/>
            <person name="Chen J.-S."/>
            <person name="Contreras A.L."/>
            <person name="Jones D."/>
            <person name="Kashket E."/>
            <person name="Mitchell W."/>
            <person name="Stoddard S."/>
            <person name="Schwarz W."/>
            <person name="Qureshi N."/>
            <person name="Young M."/>
            <person name="Shi Z."/>
            <person name="Ezeji T."/>
            <person name="White B."/>
            <person name="Blaschek H."/>
            <person name="Richardson P."/>
        </authorList>
    </citation>
    <scope>NUCLEOTIDE SEQUENCE [LARGE SCALE GENOMIC DNA]</scope>
    <source>
        <strain>ATCC 51743 / NCIMB 8052</strain>
    </source>
</reference>
<name>RL33_CLOB8</name>
<protein>
    <recommendedName>
        <fullName evidence="1">Large ribosomal subunit protein bL33</fullName>
    </recommendedName>
    <alternativeName>
        <fullName evidence="2">50S ribosomal protein L33</fullName>
    </alternativeName>
</protein>
<accession>A6LPP7</accession>
<feature type="chain" id="PRO_0000356430" description="Large ribosomal subunit protein bL33">
    <location>
        <begin position="1"/>
        <end position="49"/>
    </location>
</feature>
<dbReference type="EMBL" id="CP000721">
    <property type="protein sequence ID" value="ABR32327.1"/>
    <property type="molecule type" value="Genomic_DNA"/>
</dbReference>
<dbReference type="RefSeq" id="WP_002583138.1">
    <property type="nucleotide sequence ID" value="NC_009617.1"/>
</dbReference>
<dbReference type="SMR" id="A6LPP7"/>
<dbReference type="GeneID" id="92945906"/>
<dbReference type="KEGG" id="cbe:Cbei_0137"/>
<dbReference type="eggNOG" id="COG0267">
    <property type="taxonomic scope" value="Bacteria"/>
</dbReference>
<dbReference type="HOGENOM" id="CLU_190949_0_2_9"/>
<dbReference type="Proteomes" id="UP000000565">
    <property type="component" value="Chromosome"/>
</dbReference>
<dbReference type="GO" id="GO:0005737">
    <property type="term" value="C:cytoplasm"/>
    <property type="evidence" value="ECO:0007669"/>
    <property type="project" value="UniProtKB-ARBA"/>
</dbReference>
<dbReference type="GO" id="GO:1990904">
    <property type="term" value="C:ribonucleoprotein complex"/>
    <property type="evidence" value="ECO:0007669"/>
    <property type="project" value="UniProtKB-KW"/>
</dbReference>
<dbReference type="GO" id="GO:0005840">
    <property type="term" value="C:ribosome"/>
    <property type="evidence" value="ECO:0007669"/>
    <property type="project" value="UniProtKB-KW"/>
</dbReference>
<dbReference type="GO" id="GO:0003735">
    <property type="term" value="F:structural constituent of ribosome"/>
    <property type="evidence" value="ECO:0007669"/>
    <property type="project" value="InterPro"/>
</dbReference>
<dbReference type="GO" id="GO:0006412">
    <property type="term" value="P:translation"/>
    <property type="evidence" value="ECO:0007669"/>
    <property type="project" value="UniProtKB-UniRule"/>
</dbReference>
<dbReference type="Gene3D" id="2.20.28.120">
    <property type="entry name" value="Ribosomal protein L33"/>
    <property type="match status" value="1"/>
</dbReference>
<dbReference type="HAMAP" id="MF_00294">
    <property type="entry name" value="Ribosomal_bL33"/>
    <property type="match status" value="1"/>
</dbReference>
<dbReference type="InterPro" id="IPR001705">
    <property type="entry name" value="Ribosomal_bL33"/>
</dbReference>
<dbReference type="InterPro" id="IPR018264">
    <property type="entry name" value="Ribosomal_bL33_CS"/>
</dbReference>
<dbReference type="InterPro" id="IPR038584">
    <property type="entry name" value="Ribosomal_bL33_sf"/>
</dbReference>
<dbReference type="InterPro" id="IPR011332">
    <property type="entry name" value="Ribosomal_zn-bd"/>
</dbReference>
<dbReference type="NCBIfam" id="NF001764">
    <property type="entry name" value="PRK00504.1"/>
    <property type="match status" value="1"/>
</dbReference>
<dbReference type="NCBIfam" id="NF001860">
    <property type="entry name" value="PRK00595.1"/>
    <property type="match status" value="1"/>
</dbReference>
<dbReference type="NCBIfam" id="TIGR01023">
    <property type="entry name" value="rpmG_bact"/>
    <property type="match status" value="1"/>
</dbReference>
<dbReference type="PANTHER" id="PTHR43168">
    <property type="entry name" value="50S RIBOSOMAL PROTEIN L33, CHLOROPLASTIC"/>
    <property type="match status" value="1"/>
</dbReference>
<dbReference type="PANTHER" id="PTHR43168:SF2">
    <property type="entry name" value="LARGE RIBOSOMAL SUBUNIT PROTEIN BL33C"/>
    <property type="match status" value="1"/>
</dbReference>
<dbReference type="Pfam" id="PF00471">
    <property type="entry name" value="Ribosomal_L33"/>
    <property type="match status" value="1"/>
</dbReference>
<dbReference type="SUPFAM" id="SSF57829">
    <property type="entry name" value="Zn-binding ribosomal proteins"/>
    <property type="match status" value="1"/>
</dbReference>
<dbReference type="PROSITE" id="PS00582">
    <property type="entry name" value="RIBOSOMAL_L33"/>
    <property type="match status" value="1"/>
</dbReference>
<gene>
    <name evidence="1" type="primary">rpmG</name>
    <name type="ordered locus">Cbei_0137</name>
</gene>